<accession>Q7W5I4</accession>
<evidence type="ECO:0000255" key="1">
    <source>
        <dbReference type="HAMAP-Rule" id="MF_01815"/>
    </source>
</evidence>
<organism>
    <name type="scientific">Bordetella parapertussis (strain 12822 / ATCC BAA-587 / NCTC 13253)</name>
    <dbReference type="NCBI Taxonomy" id="257311"/>
    <lineage>
        <taxon>Bacteria</taxon>
        <taxon>Pseudomonadati</taxon>
        <taxon>Pseudomonadota</taxon>
        <taxon>Betaproteobacteria</taxon>
        <taxon>Burkholderiales</taxon>
        <taxon>Alcaligenaceae</taxon>
        <taxon>Bordetella</taxon>
    </lineage>
</organism>
<reference key="1">
    <citation type="journal article" date="2003" name="Nat. Genet.">
        <title>Comparative analysis of the genome sequences of Bordetella pertussis, Bordetella parapertussis and Bordetella bronchiseptica.</title>
        <authorList>
            <person name="Parkhill J."/>
            <person name="Sebaihia M."/>
            <person name="Preston A."/>
            <person name="Murphy L.D."/>
            <person name="Thomson N.R."/>
            <person name="Harris D.E."/>
            <person name="Holden M.T.G."/>
            <person name="Churcher C.M."/>
            <person name="Bentley S.D."/>
            <person name="Mungall K.L."/>
            <person name="Cerdeno-Tarraga A.-M."/>
            <person name="Temple L."/>
            <person name="James K.D."/>
            <person name="Harris B."/>
            <person name="Quail M.A."/>
            <person name="Achtman M."/>
            <person name="Atkin R."/>
            <person name="Baker S."/>
            <person name="Basham D."/>
            <person name="Bason N."/>
            <person name="Cherevach I."/>
            <person name="Chillingworth T."/>
            <person name="Collins M."/>
            <person name="Cronin A."/>
            <person name="Davis P."/>
            <person name="Doggett J."/>
            <person name="Feltwell T."/>
            <person name="Goble A."/>
            <person name="Hamlin N."/>
            <person name="Hauser H."/>
            <person name="Holroyd S."/>
            <person name="Jagels K."/>
            <person name="Leather S."/>
            <person name="Moule S."/>
            <person name="Norberczak H."/>
            <person name="O'Neil S."/>
            <person name="Ormond D."/>
            <person name="Price C."/>
            <person name="Rabbinowitsch E."/>
            <person name="Rutter S."/>
            <person name="Sanders M."/>
            <person name="Saunders D."/>
            <person name="Seeger K."/>
            <person name="Sharp S."/>
            <person name="Simmonds M."/>
            <person name="Skelton J."/>
            <person name="Squares R."/>
            <person name="Squares S."/>
            <person name="Stevens K."/>
            <person name="Unwin L."/>
            <person name="Whitehead S."/>
            <person name="Barrell B.G."/>
            <person name="Maskell D.J."/>
        </authorList>
    </citation>
    <scope>NUCLEOTIDE SEQUENCE [LARGE SCALE GENOMIC DNA]</scope>
    <source>
        <strain>12822 / ATCC BAA-587 / NCTC 13253</strain>
    </source>
</reference>
<feature type="chain" id="PRO_0000110404" description="Beta-ketoacyl-[acyl-carrier-protein] synthase III">
    <location>
        <begin position="1"/>
        <end position="329"/>
    </location>
</feature>
<feature type="region of interest" description="ACP-binding" evidence="1">
    <location>
        <begin position="257"/>
        <end position="261"/>
    </location>
</feature>
<feature type="active site" evidence="1">
    <location>
        <position position="123"/>
    </location>
</feature>
<feature type="active site" evidence="1">
    <location>
        <position position="256"/>
    </location>
</feature>
<feature type="active site" evidence="1">
    <location>
        <position position="286"/>
    </location>
</feature>
<sequence length="329" mass="35022">MMEKAMKYAKIAGSGGYLPERVVTNDDLAAELATRQISTSDEWIVERTGIRQRHLAERGVTTSQLATEAARRAMDDAGVQADEIDMIIVATSTPDYVFPSTACLVQANLGAKGGATFDVQAVCSGFVYAMTTADSFIRAGRARCALVIGAEVFSRILDWNDRGTCVLFGDGAGAVVLKAADEPGILAAHLHADGSQTKILCAAGNVAYGDVTGDPFLRMDGQAVFKQAVTVLDRSARDVCAEAGVEVDDIDWLIPHQANVRILNFLARKLRVPTERVVITVDQHANTSAASVPLALDVARRDGRVKPGQLVLMQGVGGGFTWGSVLARM</sequence>
<dbReference type="EC" id="2.3.1.180" evidence="1"/>
<dbReference type="EMBL" id="BX640433">
    <property type="protein sequence ID" value="CAE38592.1"/>
    <property type="molecule type" value="Genomic_DNA"/>
</dbReference>
<dbReference type="SMR" id="Q7W5I4"/>
<dbReference type="KEGG" id="bpa:BPP3307"/>
<dbReference type="HOGENOM" id="CLU_039592_3_1_4"/>
<dbReference type="UniPathway" id="UPA00094"/>
<dbReference type="Proteomes" id="UP000001421">
    <property type="component" value="Chromosome"/>
</dbReference>
<dbReference type="GO" id="GO:0005737">
    <property type="term" value="C:cytoplasm"/>
    <property type="evidence" value="ECO:0007669"/>
    <property type="project" value="UniProtKB-SubCell"/>
</dbReference>
<dbReference type="GO" id="GO:0004315">
    <property type="term" value="F:3-oxoacyl-[acyl-carrier-protein] synthase activity"/>
    <property type="evidence" value="ECO:0007669"/>
    <property type="project" value="InterPro"/>
</dbReference>
<dbReference type="GO" id="GO:0033818">
    <property type="term" value="F:beta-ketoacyl-acyl-carrier-protein synthase III activity"/>
    <property type="evidence" value="ECO:0007669"/>
    <property type="project" value="UniProtKB-UniRule"/>
</dbReference>
<dbReference type="GO" id="GO:0006633">
    <property type="term" value="P:fatty acid biosynthetic process"/>
    <property type="evidence" value="ECO:0007669"/>
    <property type="project" value="UniProtKB-UniRule"/>
</dbReference>
<dbReference type="GO" id="GO:0044550">
    <property type="term" value="P:secondary metabolite biosynthetic process"/>
    <property type="evidence" value="ECO:0007669"/>
    <property type="project" value="TreeGrafter"/>
</dbReference>
<dbReference type="CDD" id="cd00830">
    <property type="entry name" value="KAS_III"/>
    <property type="match status" value="1"/>
</dbReference>
<dbReference type="FunFam" id="3.40.47.10:FF:000004">
    <property type="entry name" value="3-oxoacyl-[acyl-carrier-protein] synthase 3"/>
    <property type="match status" value="1"/>
</dbReference>
<dbReference type="Gene3D" id="3.40.47.10">
    <property type="match status" value="1"/>
</dbReference>
<dbReference type="HAMAP" id="MF_01815">
    <property type="entry name" value="FabH"/>
    <property type="match status" value="1"/>
</dbReference>
<dbReference type="InterPro" id="IPR013747">
    <property type="entry name" value="ACP_syn_III_C"/>
</dbReference>
<dbReference type="InterPro" id="IPR013751">
    <property type="entry name" value="ACP_syn_III_N"/>
</dbReference>
<dbReference type="InterPro" id="IPR004655">
    <property type="entry name" value="FabH"/>
</dbReference>
<dbReference type="InterPro" id="IPR016039">
    <property type="entry name" value="Thiolase-like"/>
</dbReference>
<dbReference type="NCBIfam" id="TIGR00747">
    <property type="entry name" value="fabH"/>
    <property type="match status" value="1"/>
</dbReference>
<dbReference type="NCBIfam" id="NF006829">
    <property type="entry name" value="PRK09352.1"/>
    <property type="match status" value="1"/>
</dbReference>
<dbReference type="PANTHER" id="PTHR34069">
    <property type="entry name" value="3-OXOACYL-[ACYL-CARRIER-PROTEIN] SYNTHASE 3"/>
    <property type="match status" value="1"/>
</dbReference>
<dbReference type="PANTHER" id="PTHR34069:SF2">
    <property type="entry name" value="BETA-KETOACYL-[ACYL-CARRIER-PROTEIN] SYNTHASE III"/>
    <property type="match status" value="1"/>
</dbReference>
<dbReference type="Pfam" id="PF08545">
    <property type="entry name" value="ACP_syn_III"/>
    <property type="match status" value="1"/>
</dbReference>
<dbReference type="Pfam" id="PF08541">
    <property type="entry name" value="ACP_syn_III_C"/>
    <property type="match status" value="1"/>
</dbReference>
<dbReference type="SUPFAM" id="SSF53901">
    <property type="entry name" value="Thiolase-like"/>
    <property type="match status" value="1"/>
</dbReference>
<name>FABH_BORPA</name>
<gene>
    <name evidence="1" type="primary">fabH</name>
    <name type="ordered locus">BPP3307</name>
</gene>
<protein>
    <recommendedName>
        <fullName evidence="1">Beta-ketoacyl-[acyl-carrier-protein] synthase III</fullName>
        <shortName evidence="1">Beta-ketoacyl-ACP synthase III</shortName>
        <shortName evidence="1">KAS III</shortName>
        <ecNumber evidence="1">2.3.1.180</ecNumber>
    </recommendedName>
    <alternativeName>
        <fullName evidence="1">3-oxoacyl-[acyl-carrier-protein] synthase 3</fullName>
    </alternativeName>
    <alternativeName>
        <fullName evidence="1">3-oxoacyl-[acyl-carrier-protein] synthase III</fullName>
    </alternativeName>
</protein>
<comment type="function">
    <text evidence="1">Catalyzes the condensation reaction of fatty acid synthesis by the addition to an acyl acceptor of two carbons from malonyl-ACP. Catalyzes the first condensation reaction which initiates fatty acid synthesis and may therefore play a role in governing the total rate of fatty acid production. Possesses both acetoacetyl-ACP synthase and acetyl transacylase activities. Its substrate specificity determines the biosynthesis of branched-chain and/or straight-chain of fatty acids.</text>
</comment>
<comment type="catalytic activity">
    <reaction evidence="1">
        <text>malonyl-[ACP] + acetyl-CoA + H(+) = 3-oxobutanoyl-[ACP] + CO2 + CoA</text>
        <dbReference type="Rhea" id="RHEA:12080"/>
        <dbReference type="Rhea" id="RHEA-COMP:9623"/>
        <dbReference type="Rhea" id="RHEA-COMP:9625"/>
        <dbReference type="ChEBI" id="CHEBI:15378"/>
        <dbReference type="ChEBI" id="CHEBI:16526"/>
        <dbReference type="ChEBI" id="CHEBI:57287"/>
        <dbReference type="ChEBI" id="CHEBI:57288"/>
        <dbReference type="ChEBI" id="CHEBI:78449"/>
        <dbReference type="ChEBI" id="CHEBI:78450"/>
        <dbReference type="EC" id="2.3.1.180"/>
    </reaction>
</comment>
<comment type="pathway">
    <text evidence="1">Lipid metabolism; fatty acid biosynthesis.</text>
</comment>
<comment type="subunit">
    <text evidence="1">Homodimer.</text>
</comment>
<comment type="subcellular location">
    <subcellularLocation>
        <location evidence="1">Cytoplasm</location>
    </subcellularLocation>
</comment>
<comment type="domain">
    <text evidence="1">The last Arg residue of the ACP-binding site is essential for the weak association between ACP/AcpP and FabH.</text>
</comment>
<comment type="similarity">
    <text evidence="1">Belongs to the thiolase-like superfamily. FabH family.</text>
</comment>
<keyword id="KW-0012">Acyltransferase</keyword>
<keyword id="KW-0963">Cytoplasm</keyword>
<keyword id="KW-0275">Fatty acid biosynthesis</keyword>
<keyword id="KW-0276">Fatty acid metabolism</keyword>
<keyword id="KW-0444">Lipid biosynthesis</keyword>
<keyword id="KW-0443">Lipid metabolism</keyword>
<keyword id="KW-0511">Multifunctional enzyme</keyword>
<keyword id="KW-0808">Transferase</keyword>
<proteinExistence type="inferred from homology"/>